<sequence length="270" mass="32396">MLGLQIFTLLSIPTLLYTYEIEPLERTSTPPEKEFGYWCTYANHCRFCWDCQDGICRNKAFKNHSPILENDYIANCSIYRRNDFCIYHITSIKPHKTYRTECPQHINHERHEADIRKWQKLLTYGFYLAGCILAVNYIRKRSLQTVMYLLVFLVISFLLSQLMLYGELEDKKHKIGSIPPKRELEHWCTHGKYCNFCWDCQNGICKNKAFKNHPPIGENDFIRYDCWTTHLPNKCSYEKIYKHFDTHIMECSQPTHFKWYDNLMKKQDIM</sequence>
<name>1101L_ASFPP</name>
<reference key="1">
    <citation type="journal article" date="2008" name="J. Gen. Virol.">
        <title>Comparison of the genome sequences of non-pathogenic and pathogenic African swine fever virus isolates.</title>
        <authorList>
            <person name="Chapman D.A.G."/>
            <person name="Tcherepanov V."/>
            <person name="Upton C."/>
            <person name="Dixon L.K."/>
        </authorList>
    </citation>
    <scope>NUCLEOTIDE SEQUENCE [LARGE SCALE GENOMIC DNA]</scope>
    <source>
        <strain evidence="6">OURT 88/3</strain>
    </source>
</reference>
<reference key="2">
    <citation type="journal article" date="2018" name="Sci. Rep.">
        <title>The intracellular proteome of African swine fever virus.</title>
        <authorList>
            <person name="Kessler C."/>
            <person name="Forth J.H."/>
            <person name="Keil G.M."/>
            <person name="Mettenleiter T.C."/>
            <person name="Blome S."/>
            <person name="Karger A."/>
        </authorList>
    </citation>
    <scope>SIGNAL SEQUENCE CLEAVAGE SITE</scope>
</reference>
<gene>
    <name evidence="6" type="primary">MGF 110-1L</name>
</gene>
<comment type="function">
    <text evidence="1">Plays a role in virus cell tropism, and may be required for efficient virus replication in macrophages.</text>
</comment>
<comment type="subcellular location">
    <subcellularLocation>
        <location evidence="2">Membrane</location>
        <topology evidence="2">Multi-pass membrane protein</topology>
    </subcellularLocation>
</comment>
<comment type="similarity">
    <text evidence="5">Belongs to the asfivirus MGF 110 family.</text>
</comment>
<feature type="signal peptide" evidence="4">
    <location>
        <begin position="1"/>
        <end position="26"/>
    </location>
</feature>
<feature type="chain" id="PRO_0000454840" description="Protein MGF 110-1L">
    <location>
        <begin position="27"/>
        <end position="270"/>
    </location>
</feature>
<feature type="topological domain" description="Extracellular" evidence="3">
    <location>
        <begin position="27"/>
        <end position="117"/>
    </location>
</feature>
<feature type="transmembrane region" description="Helical" evidence="3">
    <location>
        <begin position="118"/>
        <end position="138"/>
    </location>
</feature>
<feature type="topological domain" description="Cytoplasmic" evidence="3">
    <location>
        <begin position="139"/>
        <end position="145"/>
    </location>
</feature>
<feature type="transmembrane region" description="Helical" evidence="3">
    <location>
        <begin position="146"/>
        <end position="166"/>
    </location>
</feature>
<feature type="topological domain" description="Extracellular" evidence="3">
    <location>
        <begin position="167"/>
        <end position="270"/>
    </location>
</feature>
<feature type="repeat" description="A" evidence="2">
    <location>
        <begin position="27"/>
        <end position="146"/>
    </location>
</feature>
<feature type="repeat" description="B" evidence="2">
    <location>
        <begin position="147"/>
        <end position="270"/>
    </location>
</feature>
<feature type="glycosylation site" description="N-linked (GlcNAc...) asparagine; by host" evidence="3">
    <location>
        <position position="75"/>
    </location>
</feature>
<dbReference type="EMBL" id="AM712240">
    <property type="protein sequence ID" value="CAN10356.1"/>
    <property type="molecule type" value="Genomic_DNA"/>
</dbReference>
<dbReference type="RefSeq" id="YP_009703616.1">
    <property type="nucleotide sequence ID" value="NC_044957.1"/>
</dbReference>
<dbReference type="GlyCosmos" id="A9JLI2">
    <property type="glycosylation" value="1 site, No reported glycans"/>
</dbReference>
<dbReference type="GeneID" id="41902425"/>
<dbReference type="Proteomes" id="UP000108903">
    <property type="component" value="Segment"/>
</dbReference>
<dbReference type="GO" id="GO:0016020">
    <property type="term" value="C:membrane"/>
    <property type="evidence" value="ECO:0007669"/>
    <property type="project" value="UniProtKB-SubCell"/>
</dbReference>
<dbReference type="InterPro" id="IPR004848">
    <property type="entry name" value="ASFV_fam_110"/>
</dbReference>
<dbReference type="Pfam" id="PF01639">
    <property type="entry name" value="v110"/>
    <property type="match status" value="2"/>
</dbReference>
<protein>
    <recommendedName>
        <fullName>Protein MGF 110-1L</fullName>
    </recommendedName>
</protein>
<keyword id="KW-0244">Early protein</keyword>
<keyword id="KW-0325">Glycoprotein</keyword>
<keyword id="KW-0472">Membrane</keyword>
<keyword id="KW-0677">Repeat</keyword>
<keyword id="KW-0732">Signal</keyword>
<keyword id="KW-0812">Transmembrane</keyword>
<keyword id="KW-1133">Transmembrane helix</keyword>
<evidence type="ECO:0000250" key="1"/>
<evidence type="ECO:0000250" key="2">
    <source>
        <dbReference type="UniProtKB" id="P18560"/>
    </source>
</evidence>
<evidence type="ECO:0000255" key="3"/>
<evidence type="ECO:0000269" key="4">
    <source>
    </source>
</evidence>
<evidence type="ECO:0000305" key="5"/>
<evidence type="ECO:0000312" key="6">
    <source>
        <dbReference type="EMBL" id="CAN10356.1"/>
    </source>
</evidence>
<organism>
    <name type="scientific">African swine fever virus (isolate Pig/Portugal/OURT88/1988)</name>
    <name type="common">ASFV</name>
    <dbReference type="NCBI Taxonomy" id="443878"/>
    <lineage>
        <taxon>Viruses</taxon>
        <taxon>Varidnaviria</taxon>
        <taxon>Bamfordvirae</taxon>
        <taxon>Nucleocytoviricota</taxon>
        <taxon>Pokkesviricetes</taxon>
        <taxon>Asfuvirales</taxon>
        <taxon>Asfarviridae</taxon>
        <taxon>Asfivirus</taxon>
        <taxon>African swine fever virus</taxon>
    </lineage>
</organism>
<organismHost>
    <name type="scientific">Ornithodoros</name>
    <name type="common">relapsing fever ticks</name>
    <dbReference type="NCBI Taxonomy" id="6937"/>
</organismHost>
<organismHost>
    <name type="scientific">Sus scrofa</name>
    <name type="common">Pig</name>
    <dbReference type="NCBI Taxonomy" id="9823"/>
</organismHost>
<accession>A9JLI2</accession>
<proteinExistence type="evidence at protein level"/>